<evidence type="ECO:0000255" key="1">
    <source>
        <dbReference type="HAMAP-Rule" id="MF_01865"/>
    </source>
</evidence>
<evidence type="ECO:0000255" key="2">
    <source>
        <dbReference type="PROSITE-ProRule" id="PRU01266"/>
    </source>
</evidence>
<feature type="chain" id="PRO_0000374725" description="Ribosomal protein uS12 methylthiotransferase RimO">
    <location>
        <begin position="1"/>
        <end position="438"/>
    </location>
</feature>
<feature type="domain" description="MTTase N-terminal" evidence="1">
    <location>
        <begin position="4"/>
        <end position="114"/>
    </location>
</feature>
<feature type="domain" description="Radical SAM core" evidence="2">
    <location>
        <begin position="132"/>
        <end position="370"/>
    </location>
</feature>
<feature type="domain" description="TRAM" evidence="1">
    <location>
        <begin position="373"/>
        <end position="438"/>
    </location>
</feature>
<feature type="binding site" evidence="1">
    <location>
        <position position="13"/>
    </location>
    <ligand>
        <name>[4Fe-4S] cluster</name>
        <dbReference type="ChEBI" id="CHEBI:49883"/>
        <label>1</label>
    </ligand>
</feature>
<feature type="binding site" evidence="1">
    <location>
        <position position="49"/>
    </location>
    <ligand>
        <name>[4Fe-4S] cluster</name>
        <dbReference type="ChEBI" id="CHEBI:49883"/>
        <label>1</label>
    </ligand>
</feature>
<feature type="binding site" evidence="1">
    <location>
        <position position="78"/>
    </location>
    <ligand>
        <name>[4Fe-4S] cluster</name>
        <dbReference type="ChEBI" id="CHEBI:49883"/>
        <label>1</label>
    </ligand>
</feature>
<feature type="binding site" evidence="1">
    <location>
        <position position="146"/>
    </location>
    <ligand>
        <name>[4Fe-4S] cluster</name>
        <dbReference type="ChEBI" id="CHEBI:49883"/>
        <label>2</label>
        <note>4Fe-4S-S-AdoMet</note>
    </ligand>
</feature>
<feature type="binding site" evidence="1">
    <location>
        <position position="150"/>
    </location>
    <ligand>
        <name>[4Fe-4S] cluster</name>
        <dbReference type="ChEBI" id="CHEBI:49883"/>
        <label>2</label>
        <note>4Fe-4S-S-AdoMet</note>
    </ligand>
</feature>
<feature type="binding site" evidence="1">
    <location>
        <position position="153"/>
    </location>
    <ligand>
        <name>[4Fe-4S] cluster</name>
        <dbReference type="ChEBI" id="CHEBI:49883"/>
        <label>2</label>
        <note>4Fe-4S-S-AdoMet</note>
    </ligand>
</feature>
<accession>A5VUQ0</accession>
<protein>
    <recommendedName>
        <fullName evidence="1">Ribosomal protein uS12 methylthiotransferase RimO</fullName>
        <shortName evidence="1">uS12 MTTase</shortName>
        <shortName evidence="1">uS12 methylthiotransferase</shortName>
        <ecNumber evidence="1">2.8.4.4</ecNumber>
    </recommendedName>
    <alternativeName>
        <fullName evidence="1">Ribosomal protein uS12 (aspartate-C(3))-methylthiotransferase</fullName>
    </alternativeName>
    <alternativeName>
        <fullName evidence="1">Ribosome maturation factor RimO</fullName>
    </alternativeName>
</protein>
<sequence>MSAPRVSFVSLGCPKALVDSERIITGLRSEGYEISRKHDGADLVIVNTCGFLDSARDESLEAIGLALNENGKVIVTGCLGAEPDVIRERHPNVLAITGPQAYESVMNAVHEVAPPPPHDPFVDLVPPQGVKLTPRHYAYLKISEGCSNRCSFCIIPALRGDLVSRPINEVLREAEKLVQAGVKEILVISQDTSAYGLDIKYQEAMWQDRTVRTKFLDLSRELGEMGVWVRMHYVYPYPHVDEVIPLMAEGKILPYLDIPFQHASPAVLKNMRRPAHQEKTSRRIQAWRETCPDLAVRSTFIVGYPGETEEDFQMLLDWLDEAKIERAGCFKYEAVKGAKANDLGLEQVPEEVKEARWHRFMAKQQQISTNLLKKKVGKRLPVIIDEANGTIGKGRTRYDAPEIDGSVHISSRRPLRVGDIVTVKIEASDAYDLHGTAV</sequence>
<proteinExistence type="inferred from homology"/>
<comment type="function">
    <text evidence="1">Catalyzes the methylthiolation of an aspartic acid residue of ribosomal protein uS12.</text>
</comment>
<comment type="catalytic activity">
    <reaction evidence="1">
        <text>L-aspartate(89)-[ribosomal protein uS12]-hydrogen + (sulfur carrier)-SH + AH2 + 2 S-adenosyl-L-methionine = 3-methylsulfanyl-L-aspartate(89)-[ribosomal protein uS12]-hydrogen + (sulfur carrier)-H + 5'-deoxyadenosine + L-methionine + A + S-adenosyl-L-homocysteine + 2 H(+)</text>
        <dbReference type="Rhea" id="RHEA:37087"/>
        <dbReference type="Rhea" id="RHEA-COMP:10460"/>
        <dbReference type="Rhea" id="RHEA-COMP:10461"/>
        <dbReference type="Rhea" id="RHEA-COMP:14737"/>
        <dbReference type="Rhea" id="RHEA-COMP:14739"/>
        <dbReference type="ChEBI" id="CHEBI:13193"/>
        <dbReference type="ChEBI" id="CHEBI:15378"/>
        <dbReference type="ChEBI" id="CHEBI:17319"/>
        <dbReference type="ChEBI" id="CHEBI:17499"/>
        <dbReference type="ChEBI" id="CHEBI:29917"/>
        <dbReference type="ChEBI" id="CHEBI:29961"/>
        <dbReference type="ChEBI" id="CHEBI:57844"/>
        <dbReference type="ChEBI" id="CHEBI:57856"/>
        <dbReference type="ChEBI" id="CHEBI:59789"/>
        <dbReference type="ChEBI" id="CHEBI:64428"/>
        <dbReference type="ChEBI" id="CHEBI:73599"/>
        <dbReference type="EC" id="2.8.4.4"/>
    </reaction>
</comment>
<comment type="cofactor">
    <cofactor evidence="1">
        <name>[4Fe-4S] cluster</name>
        <dbReference type="ChEBI" id="CHEBI:49883"/>
    </cofactor>
    <text evidence="1">Binds 2 [4Fe-4S] clusters. One cluster is coordinated with 3 cysteines and an exchangeable S-adenosyl-L-methionine.</text>
</comment>
<comment type="subcellular location">
    <subcellularLocation>
        <location evidence="1">Cytoplasm</location>
    </subcellularLocation>
</comment>
<comment type="similarity">
    <text evidence="1">Belongs to the methylthiotransferase family. RimO subfamily.</text>
</comment>
<organism>
    <name type="scientific">Brucella ovis (strain ATCC 25840 / 63/290 / NCTC 10512)</name>
    <dbReference type="NCBI Taxonomy" id="444178"/>
    <lineage>
        <taxon>Bacteria</taxon>
        <taxon>Pseudomonadati</taxon>
        <taxon>Pseudomonadota</taxon>
        <taxon>Alphaproteobacteria</taxon>
        <taxon>Hyphomicrobiales</taxon>
        <taxon>Brucellaceae</taxon>
        <taxon>Brucella/Ochrobactrum group</taxon>
        <taxon>Brucella</taxon>
    </lineage>
</organism>
<reference key="1">
    <citation type="journal article" date="2009" name="PLoS ONE">
        <title>Genome degradation in Brucella ovis corresponds with narrowing of its host range and tissue tropism.</title>
        <authorList>
            <person name="Tsolis R.M."/>
            <person name="Seshadri R."/>
            <person name="Santos R.L."/>
            <person name="Sangari F.J."/>
            <person name="Lobo J.M."/>
            <person name="de Jong M.F."/>
            <person name="Ren Q."/>
            <person name="Myers G."/>
            <person name="Brinkac L.M."/>
            <person name="Nelson W.C."/>
            <person name="Deboy R.T."/>
            <person name="Angiuoli S."/>
            <person name="Khouri H."/>
            <person name="Dimitrov G."/>
            <person name="Robinson J.R."/>
            <person name="Mulligan S."/>
            <person name="Walker R.L."/>
            <person name="Elzer P.E."/>
            <person name="Hassan K.A."/>
            <person name="Paulsen I.T."/>
        </authorList>
    </citation>
    <scope>NUCLEOTIDE SEQUENCE [LARGE SCALE GENOMIC DNA]</scope>
    <source>
        <strain>ATCC 25840 / 63/290 / NCTC 10512</strain>
    </source>
</reference>
<name>RIMO_BRUO2</name>
<dbReference type="EC" id="2.8.4.4" evidence="1"/>
<dbReference type="EMBL" id="CP000709">
    <property type="protein sequence ID" value="ABQ62012.1"/>
    <property type="molecule type" value="Genomic_DNA"/>
</dbReference>
<dbReference type="RefSeq" id="WP_006016077.1">
    <property type="nucleotide sequence ID" value="NC_009504.1"/>
</dbReference>
<dbReference type="SMR" id="A5VUQ0"/>
<dbReference type="GeneID" id="45125915"/>
<dbReference type="KEGG" id="bov:BOV_A0531"/>
<dbReference type="HOGENOM" id="CLU_018697_0_0_5"/>
<dbReference type="PhylomeDB" id="A5VUQ0"/>
<dbReference type="Proteomes" id="UP000006383">
    <property type="component" value="Chromosome II"/>
</dbReference>
<dbReference type="GO" id="GO:0005829">
    <property type="term" value="C:cytosol"/>
    <property type="evidence" value="ECO:0007669"/>
    <property type="project" value="TreeGrafter"/>
</dbReference>
<dbReference type="GO" id="GO:0051539">
    <property type="term" value="F:4 iron, 4 sulfur cluster binding"/>
    <property type="evidence" value="ECO:0007669"/>
    <property type="project" value="UniProtKB-UniRule"/>
</dbReference>
<dbReference type="GO" id="GO:0035599">
    <property type="term" value="F:aspartic acid methylthiotransferase activity"/>
    <property type="evidence" value="ECO:0007669"/>
    <property type="project" value="TreeGrafter"/>
</dbReference>
<dbReference type="GO" id="GO:0046872">
    <property type="term" value="F:metal ion binding"/>
    <property type="evidence" value="ECO:0007669"/>
    <property type="project" value="UniProtKB-KW"/>
</dbReference>
<dbReference type="GO" id="GO:0103039">
    <property type="term" value="F:protein methylthiotransferase activity"/>
    <property type="evidence" value="ECO:0007669"/>
    <property type="project" value="UniProtKB-EC"/>
</dbReference>
<dbReference type="GO" id="GO:0006400">
    <property type="term" value="P:tRNA modification"/>
    <property type="evidence" value="ECO:0007669"/>
    <property type="project" value="InterPro"/>
</dbReference>
<dbReference type="CDD" id="cd01335">
    <property type="entry name" value="Radical_SAM"/>
    <property type="match status" value="1"/>
</dbReference>
<dbReference type="FunFam" id="3.40.50.12160:FF:000002">
    <property type="entry name" value="Ribosomal protein S12 methylthiotransferase RimO"/>
    <property type="match status" value="1"/>
</dbReference>
<dbReference type="FunFam" id="3.80.30.20:FF:000001">
    <property type="entry name" value="tRNA-2-methylthio-N(6)-dimethylallyladenosine synthase 2"/>
    <property type="match status" value="1"/>
</dbReference>
<dbReference type="Gene3D" id="3.40.50.12160">
    <property type="entry name" value="Methylthiotransferase, N-terminal domain"/>
    <property type="match status" value="1"/>
</dbReference>
<dbReference type="Gene3D" id="2.40.50.140">
    <property type="entry name" value="Nucleic acid-binding proteins"/>
    <property type="match status" value="1"/>
</dbReference>
<dbReference type="Gene3D" id="3.80.30.20">
    <property type="entry name" value="tm_1862 like domain"/>
    <property type="match status" value="1"/>
</dbReference>
<dbReference type="HAMAP" id="MF_01865">
    <property type="entry name" value="MTTase_RimO"/>
    <property type="match status" value="1"/>
</dbReference>
<dbReference type="InterPro" id="IPR006638">
    <property type="entry name" value="Elp3/MiaA/NifB-like_rSAM"/>
</dbReference>
<dbReference type="InterPro" id="IPR005839">
    <property type="entry name" value="Methylthiotransferase"/>
</dbReference>
<dbReference type="InterPro" id="IPR020612">
    <property type="entry name" value="Methylthiotransferase_CS"/>
</dbReference>
<dbReference type="InterPro" id="IPR013848">
    <property type="entry name" value="Methylthiotransferase_N"/>
</dbReference>
<dbReference type="InterPro" id="IPR038135">
    <property type="entry name" value="Methylthiotransferase_N_sf"/>
</dbReference>
<dbReference type="InterPro" id="IPR012340">
    <property type="entry name" value="NA-bd_OB-fold"/>
</dbReference>
<dbReference type="InterPro" id="IPR005840">
    <property type="entry name" value="Ribosomal_uS12_MeSTrfase_RimO"/>
</dbReference>
<dbReference type="InterPro" id="IPR007197">
    <property type="entry name" value="rSAM"/>
</dbReference>
<dbReference type="InterPro" id="IPR023404">
    <property type="entry name" value="rSAM_horseshoe"/>
</dbReference>
<dbReference type="InterPro" id="IPR002792">
    <property type="entry name" value="TRAM_dom"/>
</dbReference>
<dbReference type="NCBIfam" id="TIGR01125">
    <property type="entry name" value="30S ribosomal protein S12 methylthiotransferase RimO"/>
    <property type="match status" value="1"/>
</dbReference>
<dbReference type="NCBIfam" id="TIGR00089">
    <property type="entry name" value="MiaB/RimO family radical SAM methylthiotransferase"/>
    <property type="match status" value="1"/>
</dbReference>
<dbReference type="PANTHER" id="PTHR43837">
    <property type="entry name" value="RIBOSOMAL PROTEIN S12 METHYLTHIOTRANSFERASE RIMO"/>
    <property type="match status" value="1"/>
</dbReference>
<dbReference type="PANTHER" id="PTHR43837:SF1">
    <property type="entry name" value="RIBOSOMAL PROTEIN US12 METHYLTHIOTRANSFERASE RIMO"/>
    <property type="match status" value="1"/>
</dbReference>
<dbReference type="Pfam" id="PF04055">
    <property type="entry name" value="Radical_SAM"/>
    <property type="match status" value="1"/>
</dbReference>
<dbReference type="Pfam" id="PF18693">
    <property type="entry name" value="TRAM_2"/>
    <property type="match status" value="1"/>
</dbReference>
<dbReference type="Pfam" id="PF00919">
    <property type="entry name" value="UPF0004"/>
    <property type="match status" value="1"/>
</dbReference>
<dbReference type="SFLD" id="SFLDG01082">
    <property type="entry name" value="B12-binding_domain_containing"/>
    <property type="match status" value="1"/>
</dbReference>
<dbReference type="SFLD" id="SFLDS00029">
    <property type="entry name" value="Radical_SAM"/>
    <property type="match status" value="1"/>
</dbReference>
<dbReference type="SFLD" id="SFLDF00274">
    <property type="entry name" value="ribosomal_protein_S12_methylth"/>
    <property type="match status" value="1"/>
</dbReference>
<dbReference type="SMART" id="SM00729">
    <property type="entry name" value="Elp3"/>
    <property type="match status" value="1"/>
</dbReference>
<dbReference type="SUPFAM" id="SSF102114">
    <property type="entry name" value="Radical SAM enzymes"/>
    <property type="match status" value="1"/>
</dbReference>
<dbReference type="PROSITE" id="PS51449">
    <property type="entry name" value="MTTASE_N"/>
    <property type="match status" value="1"/>
</dbReference>
<dbReference type="PROSITE" id="PS01278">
    <property type="entry name" value="MTTASE_RADICAL"/>
    <property type="match status" value="1"/>
</dbReference>
<dbReference type="PROSITE" id="PS51918">
    <property type="entry name" value="RADICAL_SAM"/>
    <property type="match status" value="1"/>
</dbReference>
<dbReference type="PROSITE" id="PS50926">
    <property type="entry name" value="TRAM"/>
    <property type="match status" value="1"/>
</dbReference>
<keyword id="KW-0004">4Fe-4S</keyword>
<keyword id="KW-0963">Cytoplasm</keyword>
<keyword id="KW-0408">Iron</keyword>
<keyword id="KW-0411">Iron-sulfur</keyword>
<keyword id="KW-0479">Metal-binding</keyword>
<keyword id="KW-0949">S-adenosyl-L-methionine</keyword>
<keyword id="KW-0808">Transferase</keyword>
<gene>
    <name evidence="1" type="primary">rimO</name>
    <name type="ordered locus">BOV_A0531</name>
</gene>